<proteinExistence type="inferred from homology"/>
<gene>
    <name evidence="1" type="primary">uppP</name>
    <name type="ordered locus">Pden_0491</name>
</gene>
<name>UPPP_PARDP</name>
<accession>A1AZA9</accession>
<organism>
    <name type="scientific">Paracoccus denitrificans (strain Pd 1222)</name>
    <dbReference type="NCBI Taxonomy" id="318586"/>
    <lineage>
        <taxon>Bacteria</taxon>
        <taxon>Pseudomonadati</taxon>
        <taxon>Pseudomonadota</taxon>
        <taxon>Alphaproteobacteria</taxon>
        <taxon>Rhodobacterales</taxon>
        <taxon>Paracoccaceae</taxon>
        <taxon>Paracoccus</taxon>
    </lineage>
</organism>
<evidence type="ECO:0000255" key="1">
    <source>
        <dbReference type="HAMAP-Rule" id="MF_01006"/>
    </source>
</evidence>
<protein>
    <recommendedName>
        <fullName evidence="1">Undecaprenyl-diphosphatase</fullName>
        <ecNumber evidence="1">3.6.1.27</ecNumber>
    </recommendedName>
    <alternativeName>
        <fullName evidence="1">Bacitracin resistance protein</fullName>
    </alternativeName>
    <alternativeName>
        <fullName evidence="1">Undecaprenyl pyrophosphate phosphatase</fullName>
    </alternativeName>
</protein>
<feature type="chain" id="PRO_0000290741" description="Undecaprenyl-diphosphatase">
    <location>
        <begin position="1"/>
        <end position="267"/>
    </location>
</feature>
<feature type="transmembrane region" description="Helical" evidence="1">
    <location>
        <begin position="5"/>
        <end position="25"/>
    </location>
</feature>
<feature type="transmembrane region" description="Helical" evidence="1">
    <location>
        <begin position="45"/>
        <end position="65"/>
    </location>
</feature>
<feature type="transmembrane region" description="Helical" evidence="1">
    <location>
        <begin position="82"/>
        <end position="102"/>
    </location>
</feature>
<feature type="transmembrane region" description="Helical" evidence="1">
    <location>
        <begin position="108"/>
        <end position="128"/>
    </location>
</feature>
<feature type="transmembrane region" description="Helical" evidence="1">
    <location>
        <begin position="143"/>
        <end position="163"/>
    </location>
</feature>
<feature type="transmembrane region" description="Helical" evidence="1">
    <location>
        <begin position="183"/>
        <end position="203"/>
    </location>
</feature>
<feature type="transmembrane region" description="Helical" evidence="1">
    <location>
        <begin position="213"/>
        <end position="233"/>
    </location>
</feature>
<feature type="transmembrane region" description="Helical" evidence="1">
    <location>
        <begin position="243"/>
        <end position="263"/>
    </location>
</feature>
<sequence>MDHNTIVAAALGLLEGLTEFIPVSSTGHVLLAGHFLGFDSPGRAFEVLIQLGAIMAILGVYAGRLWRIFSSAPQDPRARRFILAVLLAFLPAVVIGVLAHRIIKEVLFETPTLIAVMLIVGGVVLLFVDRMANRPRHFSAEDFPLPMALKIGFIQCLAMIPGVSRSGATIVGALLLGADKRSAAEFSFFLSMPTMLGAFVYDLYKNRDILDAAATGNIVIGFVCAFLAAVVVVRGLLNYVSTYGYGLFAWWRIAVGVAVLLALQAGW</sequence>
<dbReference type="EC" id="3.6.1.27" evidence="1"/>
<dbReference type="EMBL" id="CP000489">
    <property type="protein sequence ID" value="ABL68603.1"/>
    <property type="molecule type" value="Genomic_DNA"/>
</dbReference>
<dbReference type="SMR" id="A1AZA9"/>
<dbReference type="STRING" id="318586.Pden_0491"/>
<dbReference type="EnsemblBacteria" id="ABL68603">
    <property type="protein sequence ID" value="ABL68603"/>
    <property type="gene ID" value="Pden_0491"/>
</dbReference>
<dbReference type="KEGG" id="pde:Pden_0491"/>
<dbReference type="eggNOG" id="COG1968">
    <property type="taxonomic scope" value="Bacteria"/>
</dbReference>
<dbReference type="HOGENOM" id="CLU_060296_2_0_5"/>
<dbReference type="OrthoDB" id="9808289at2"/>
<dbReference type="Proteomes" id="UP000000361">
    <property type="component" value="Chromosome 1"/>
</dbReference>
<dbReference type="GO" id="GO:0005886">
    <property type="term" value="C:plasma membrane"/>
    <property type="evidence" value="ECO:0007669"/>
    <property type="project" value="UniProtKB-SubCell"/>
</dbReference>
<dbReference type="GO" id="GO:0050380">
    <property type="term" value="F:undecaprenyl-diphosphatase activity"/>
    <property type="evidence" value="ECO:0007669"/>
    <property type="project" value="UniProtKB-UniRule"/>
</dbReference>
<dbReference type="GO" id="GO:0071555">
    <property type="term" value="P:cell wall organization"/>
    <property type="evidence" value="ECO:0007669"/>
    <property type="project" value="UniProtKB-KW"/>
</dbReference>
<dbReference type="GO" id="GO:0009252">
    <property type="term" value="P:peptidoglycan biosynthetic process"/>
    <property type="evidence" value="ECO:0007669"/>
    <property type="project" value="UniProtKB-KW"/>
</dbReference>
<dbReference type="GO" id="GO:0008360">
    <property type="term" value="P:regulation of cell shape"/>
    <property type="evidence" value="ECO:0007669"/>
    <property type="project" value="UniProtKB-KW"/>
</dbReference>
<dbReference type="GO" id="GO:0046677">
    <property type="term" value="P:response to antibiotic"/>
    <property type="evidence" value="ECO:0007669"/>
    <property type="project" value="UniProtKB-UniRule"/>
</dbReference>
<dbReference type="HAMAP" id="MF_01006">
    <property type="entry name" value="Undec_diphosphatase"/>
    <property type="match status" value="1"/>
</dbReference>
<dbReference type="InterPro" id="IPR003824">
    <property type="entry name" value="UppP"/>
</dbReference>
<dbReference type="NCBIfam" id="NF001389">
    <property type="entry name" value="PRK00281.1-2"/>
    <property type="match status" value="1"/>
</dbReference>
<dbReference type="NCBIfam" id="NF001390">
    <property type="entry name" value="PRK00281.1-4"/>
    <property type="match status" value="1"/>
</dbReference>
<dbReference type="NCBIfam" id="TIGR00753">
    <property type="entry name" value="undec_PP_bacA"/>
    <property type="match status" value="1"/>
</dbReference>
<dbReference type="PANTHER" id="PTHR30622">
    <property type="entry name" value="UNDECAPRENYL-DIPHOSPHATASE"/>
    <property type="match status" value="1"/>
</dbReference>
<dbReference type="PANTHER" id="PTHR30622:SF3">
    <property type="entry name" value="UNDECAPRENYL-DIPHOSPHATASE"/>
    <property type="match status" value="1"/>
</dbReference>
<dbReference type="Pfam" id="PF02673">
    <property type="entry name" value="BacA"/>
    <property type="match status" value="1"/>
</dbReference>
<comment type="function">
    <text evidence="1">Catalyzes the dephosphorylation of undecaprenyl diphosphate (UPP). Confers resistance to bacitracin.</text>
</comment>
<comment type="catalytic activity">
    <reaction evidence="1">
        <text>di-trans,octa-cis-undecaprenyl diphosphate + H2O = di-trans,octa-cis-undecaprenyl phosphate + phosphate + H(+)</text>
        <dbReference type="Rhea" id="RHEA:28094"/>
        <dbReference type="ChEBI" id="CHEBI:15377"/>
        <dbReference type="ChEBI" id="CHEBI:15378"/>
        <dbReference type="ChEBI" id="CHEBI:43474"/>
        <dbReference type="ChEBI" id="CHEBI:58405"/>
        <dbReference type="ChEBI" id="CHEBI:60392"/>
        <dbReference type="EC" id="3.6.1.27"/>
    </reaction>
</comment>
<comment type="subcellular location">
    <subcellularLocation>
        <location evidence="1">Cell inner membrane</location>
        <topology evidence="1">Multi-pass membrane protein</topology>
    </subcellularLocation>
</comment>
<comment type="miscellaneous">
    <text>Bacitracin is thought to be involved in the inhibition of peptidoglycan synthesis by sequestering undecaprenyl diphosphate, thereby reducing the pool of lipid carrier available.</text>
</comment>
<comment type="similarity">
    <text evidence="1">Belongs to the UppP family.</text>
</comment>
<reference key="1">
    <citation type="submission" date="2006-12" db="EMBL/GenBank/DDBJ databases">
        <title>Complete sequence of chromosome 1 of Paracoccus denitrificans PD1222.</title>
        <authorList>
            <person name="Copeland A."/>
            <person name="Lucas S."/>
            <person name="Lapidus A."/>
            <person name="Barry K."/>
            <person name="Detter J.C."/>
            <person name="Glavina del Rio T."/>
            <person name="Hammon N."/>
            <person name="Israni S."/>
            <person name="Dalin E."/>
            <person name="Tice H."/>
            <person name="Pitluck S."/>
            <person name="Munk A.C."/>
            <person name="Brettin T."/>
            <person name="Bruce D."/>
            <person name="Han C."/>
            <person name="Tapia R."/>
            <person name="Gilna P."/>
            <person name="Schmutz J."/>
            <person name="Larimer F."/>
            <person name="Land M."/>
            <person name="Hauser L."/>
            <person name="Kyrpides N."/>
            <person name="Lykidis A."/>
            <person name="Spiro S."/>
            <person name="Richardson D.J."/>
            <person name="Moir J.W.B."/>
            <person name="Ferguson S.J."/>
            <person name="van Spanning R.J.M."/>
            <person name="Richardson P."/>
        </authorList>
    </citation>
    <scope>NUCLEOTIDE SEQUENCE [LARGE SCALE GENOMIC DNA]</scope>
    <source>
        <strain>Pd 1222</strain>
    </source>
</reference>
<keyword id="KW-0046">Antibiotic resistance</keyword>
<keyword id="KW-0997">Cell inner membrane</keyword>
<keyword id="KW-1003">Cell membrane</keyword>
<keyword id="KW-0133">Cell shape</keyword>
<keyword id="KW-0961">Cell wall biogenesis/degradation</keyword>
<keyword id="KW-0378">Hydrolase</keyword>
<keyword id="KW-0472">Membrane</keyword>
<keyword id="KW-0573">Peptidoglycan synthesis</keyword>
<keyword id="KW-1185">Reference proteome</keyword>
<keyword id="KW-0812">Transmembrane</keyword>
<keyword id="KW-1133">Transmembrane helix</keyword>